<feature type="chain" id="PRO_1000184059" description="Large ribosomal subunit protein uL23">
    <location>
        <begin position="1"/>
        <end position="97"/>
    </location>
</feature>
<reference key="1">
    <citation type="submission" date="2009-01" db="EMBL/GenBank/DDBJ databases">
        <title>Complete sequence of Anaeromyxobacter dehalogenans 2CP-1.</title>
        <authorList>
            <person name="Lucas S."/>
            <person name="Copeland A."/>
            <person name="Lapidus A."/>
            <person name="Glavina del Rio T."/>
            <person name="Dalin E."/>
            <person name="Tice H."/>
            <person name="Bruce D."/>
            <person name="Goodwin L."/>
            <person name="Pitluck S."/>
            <person name="Saunders E."/>
            <person name="Brettin T."/>
            <person name="Detter J.C."/>
            <person name="Han C."/>
            <person name="Larimer F."/>
            <person name="Land M."/>
            <person name="Hauser L."/>
            <person name="Kyrpides N."/>
            <person name="Ovchinnikova G."/>
            <person name="Beliaev A.S."/>
            <person name="Richardson P."/>
        </authorList>
    </citation>
    <scope>NUCLEOTIDE SEQUENCE [LARGE SCALE GENOMIC DNA]</scope>
    <source>
        <strain>2CP-1 / ATCC BAA-258</strain>
    </source>
</reference>
<comment type="function">
    <text evidence="1">One of the early assembly proteins it binds 23S rRNA. One of the proteins that surrounds the polypeptide exit tunnel on the outside of the ribosome. Forms the main docking site for trigger factor binding to the ribosome.</text>
</comment>
<comment type="subunit">
    <text evidence="1">Part of the 50S ribosomal subunit. Contacts protein L29, and trigger factor when it is bound to the ribosome.</text>
</comment>
<comment type="similarity">
    <text evidence="1">Belongs to the universal ribosomal protein uL23 family.</text>
</comment>
<gene>
    <name evidence="1" type="primary">rplW</name>
    <name type="ordered locus">A2cp1_2020</name>
</gene>
<sequence>MNLAVQDVVKRPLITEKAERAREANRQYAFEVHRDATKIQVKQAVEKLFNVHVLDVRTAIARGKNKRVGRNVGRRPNWKKAYVTLKEGDTIALFEGT</sequence>
<accession>B8J862</accession>
<keyword id="KW-0687">Ribonucleoprotein</keyword>
<keyword id="KW-0689">Ribosomal protein</keyword>
<keyword id="KW-0694">RNA-binding</keyword>
<keyword id="KW-0699">rRNA-binding</keyword>
<evidence type="ECO:0000255" key="1">
    <source>
        <dbReference type="HAMAP-Rule" id="MF_01369"/>
    </source>
</evidence>
<evidence type="ECO:0000305" key="2"/>
<protein>
    <recommendedName>
        <fullName evidence="1">Large ribosomal subunit protein uL23</fullName>
    </recommendedName>
    <alternativeName>
        <fullName evidence="2">50S ribosomal protein L23</fullName>
    </alternativeName>
</protein>
<dbReference type="EMBL" id="CP001359">
    <property type="protein sequence ID" value="ACL65361.1"/>
    <property type="molecule type" value="Genomic_DNA"/>
</dbReference>
<dbReference type="RefSeq" id="WP_012525975.1">
    <property type="nucleotide sequence ID" value="NC_011891.1"/>
</dbReference>
<dbReference type="SMR" id="B8J862"/>
<dbReference type="KEGG" id="acp:A2cp1_2020"/>
<dbReference type="HOGENOM" id="CLU_037562_3_1_7"/>
<dbReference type="Proteomes" id="UP000007089">
    <property type="component" value="Chromosome"/>
</dbReference>
<dbReference type="GO" id="GO:1990904">
    <property type="term" value="C:ribonucleoprotein complex"/>
    <property type="evidence" value="ECO:0007669"/>
    <property type="project" value="UniProtKB-KW"/>
</dbReference>
<dbReference type="GO" id="GO:0005840">
    <property type="term" value="C:ribosome"/>
    <property type="evidence" value="ECO:0007669"/>
    <property type="project" value="UniProtKB-KW"/>
</dbReference>
<dbReference type="GO" id="GO:0019843">
    <property type="term" value="F:rRNA binding"/>
    <property type="evidence" value="ECO:0007669"/>
    <property type="project" value="UniProtKB-UniRule"/>
</dbReference>
<dbReference type="GO" id="GO:0003735">
    <property type="term" value="F:structural constituent of ribosome"/>
    <property type="evidence" value="ECO:0007669"/>
    <property type="project" value="InterPro"/>
</dbReference>
<dbReference type="GO" id="GO:0006412">
    <property type="term" value="P:translation"/>
    <property type="evidence" value="ECO:0007669"/>
    <property type="project" value="UniProtKB-UniRule"/>
</dbReference>
<dbReference type="FunFam" id="3.30.70.330:FF:000001">
    <property type="entry name" value="50S ribosomal protein L23"/>
    <property type="match status" value="1"/>
</dbReference>
<dbReference type="Gene3D" id="3.30.70.330">
    <property type="match status" value="1"/>
</dbReference>
<dbReference type="HAMAP" id="MF_01369_B">
    <property type="entry name" value="Ribosomal_uL23_B"/>
    <property type="match status" value="1"/>
</dbReference>
<dbReference type="InterPro" id="IPR012677">
    <property type="entry name" value="Nucleotide-bd_a/b_plait_sf"/>
</dbReference>
<dbReference type="InterPro" id="IPR013025">
    <property type="entry name" value="Ribosomal_uL23-like"/>
</dbReference>
<dbReference type="InterPro" id="IPR012678">
    <property type="entry name" value="Ribosomal_uL23/eL15/eS24_sf"/>
</dbReference>
<dbReference type="InterPro" id="IPR001014">
    <property type="entry name" value="Ribosomal_uL23_CS"/>
</dbReference>
<dbReference type="NCBIfam" id="NF004359">
    <property type="entry name" value="PRK05738.1-3"/>
    <property type="match status" value="1"/>
</dbReference>
<dbReference type="NCBIfam" id="NF004363">
    <property type="entry name" value="PRK05738.2-4"/>
    <property type="match status" value="1"/>
</dbReference>
<dbReference type="NCBIfam" id="NF004366">
    <property type="entry name" value="PRK05738.3-2"/>
    <property type="match status" value="1"/>
</dbReference>
<dbReference type="PANTHER" id="PTHR11620">
    <property type="entry name" value="60S RIBOSOMAL PROTEIN L23A"/>
    <property type="match status" value="1"/>
</dbReference>
<dbReference type="Pfam" id="PF00276">
    <property type="entry name" value="Ribosomal_L23"/>
    <property type="match status" value="1"/>
</dbReference>
<dbReference type="SUPFAM" id="SSF54189">
    <property type="entry name" value="Ribosomal proteins S24e, L23 and L15e"/>
    <property type="match status" value="1"/>
</dbReference>
<dbReference type="PROSITE" id="PS00050">
    <property type="entry name" value="RIBOSOMAL_L23"/>
    <property type="match status" value="1"/>
</dbReference>
<organism>
    <name type="scientific">Anaeromyxobacter dehalogenans (strain 2CP-1 / ATCC BAA-258)</name>
    <dbReference type="NCBI Taxonomy" id="455488"/>
    <lineage>
        <taxon>Bacteria</taxon>
        <taxon>Pseudomonadati</taxon>
        <taxon>Myxococcota</taxon>
        <taxon>Myxococcia</taxon>
        <taxon>Myxococcales</taxon>
        <taxon>Cystobacterineae</taxon>
        <taxon>Anaeromyxobacteraceae</taxon>
        <taxon>Anaeromyxobacter</taxon>
    </lineage>
</organism>
<proteinExistence type="inferred from homology"/>
<name>RL23_ANAD2</name>